<proteinExistence type="inferred from homology"/>
<feature type="chain" id="PRO_0000190586" description="4-hydroxy-3-methylbut-2-en-1-yl diphosphate synthase (flavodoxin)">
    <location>
        <begin position="1"/>
        <end position="354"/>
    </location>
</feature>
<feature type="binding site" evidence="1">
    <location>
        <position position="262"/>
    </location>
    <ligand>
        <name>[4Fe-4S] cluster</name>
        <dbReference type="ChEBI" id="CHEBI:49883"/>
    </ligand>
</feature>
<feature type="binding site" evidence="1">
    <location>
        <position position="265"/>
    </location>
    <ligand>
        <name>[4Fe-4S] cluster</name>
        <dbReference type="ChEBI" id="CHEBI:49883"/>
    </ligand>
</feature>
<feature type="binding site" evidence="1">
    <location>
        <position position="297"/>
    </location>
    <ligand>
        <name>[4Fe-4S] cluster</name>
        <dbReference type="ChEBI" id="CHEBI:49883"/>
    </ligand>
</feature>
<feature type="binding site" evidence="1">
    <location>
        <position position="304"/>
    </location>
    <ligand>
        <name>[4Fe-4S] cluster</name>
        <dbReference type="ChEBI" id="CHEBI:49883"/>
    </ligand>
</feature>
<gene>
    <name evidence="1" type="primary">ispG</name>
    <name type="synonym">gcpE</name>
    <name type="ordered locus">HH_0807</name>
</gene>
<protein>
    <recommendedName>
        <fullName evidence="1">4-hydroxy-3-methylbut-2-en-1-yl diphosphate synthase (flavodoxin)</fullName>
        <ecNumber evidence="1">1.17.7.3</ecNumber>
    </recommendedName>
    <alternativeName>
        <fullName evidence="1">1-hydroxy-2-methyl-2-(E)-butenyl 4-diphosphate synthase</fullName>
    </alternativeName>
</protein>
<keyword id="KW-0004">4Fe-4S</keyword>
<keyword id="KW-0408">Iron</keyword>
<keyword id="KW-0411">Iron-sulfur</keyword>
<keyword id="KW-0414">Isoprene biosynthesis</keyword>
<keyword id="KW-0479">Metal-binding</keyword>
<keyword id="KW-0560">Oxidoreductase</keyword>
<keyword id="KW-1185">Reference proteome</keyword>
<accession>Q7VI04</accession>
<organism>
    <name type="scientific">Helicobacter hepaticus (strain ATCC 51449 / 3B1)</name>
    <dbReference type="NCBI Taxonomy" id="235279"/>
    <lineage>
        <taxon>Bacteria</taxon>
        <taxon>Pseudomonadati</taxon>
        <taxon>Campylobacterota</taxon>
        <taxon>Epsilonproteobacteria</taxon>
        <taxon>Campylobacterales</taxon>
        <taxon>Helicobacteraceae</taxon>
        <taxon>Helicobacter</taxon>
    </lineage>
</organism>
<evidence type="ECO:0000255" key="1">
    <source>
        <dbReference type="HAMAP-Rule" id="MF_00159"/>
    </source>
</evidence>
<reference key="1">
    <citation type="journal article" date="2003" name="Proc. Natl. Acad. Sci. U.S.A.">
        <title>The complete genome sequence of the carcinogenic bacterium Helicobacter hepaticus.</title>
        <authorList>
            <person name="Suerbaum S."/>
            <person name="Josenhans C."/>
            <person name="Sterzenbach T."/>
            <person name="Drescher B."/>
            <person name="Brandt P."/>
            <person name="Bell M."/>
            <person name="Droege M."/>
            <person name="Fartmann B."/>
            <person name="Fischer H.-P."/>
            <person name="Ge Z."/>
            <person name="Hoerster A."/>
            <person name="Holland R."/>
            <person name="Klein K."/>
            <person name="Koenig J."/>
            <person name="Macko L."/>
            <person name="Mendz G.L."/>
            <person name="Nyakatura G."/>
            <person name="Schauer D.B."/>
            <person name="Shen Z."/>
            <person name="Weber J."/>
            <person name="Frosch M."/>
            <person name="Fox J.G."/>
        </authorList>
    </citation>
    <scope>NUCLEOTIDE SEQUENCE [LARGE SCALE GENOMIC DNA]</scope>
    <source>
        <strain>ATCC 51449 / 3B1</strain>
    </source>
</reference>
<sequence length="354" mass="38694">MQRVKTKQIFVGNVAVGGDAPISVQSMTFSKTCDIEATKAQLDRLYFAGADMVRVAVSDPKDADALKDLKKVSPLPLIADIHFRYKFALIAAESVDCIRINPGNIGSKDRIKAVADACNARGIPIRIGVNGGSLEKQFEEKYGATPKGMVESALYNIKLLEDFGFSNIKISLKASDVLRTMEAYRMLRPLVDYPFHLGVTEAGTLPHSMIKSAMALGGLLMEGIGDTMRISITGELEEEIKVARLILQYSGRQKSGVSIVSCPTCGRIEANLVKMVQEVESRIKHIKIPLQVSVMGCAVNALGEAKHADIAIAFGNKDGLIIKEGKILCKLKEDQLLERFITEVEELAKQREEV</sequence>
<name>ISPG_HELHP</name>
<comment type="function">
    <text evidence="1">Converts 2C-methyl-D-erythritol 2,4-cyclodiphosphate (ME-2,4cPP) into 1-hydroxy-2-methyl-2-(E)-butenyl 4-diphosphate.</text>
</comment>
<comment type="catalytic activity">
    <reaction evidence="1">
        <text>(2E)-4-hydroxy-3-methylbut-2-enyl diphosphate + oxidized [flavodoxin] + H2O + 2 H(+) = 2-C-methyl-D-erythritol 2,4-cyclic diphosphate + reduced [flavodoxin]</text>
        <dbReference type="Rhea" id="RHEA:43604"/>
        <dbReference type="Rhea" id="RHEA-COMP:10622"/>
        <dbReference type="Rhea" id="RHEA-COMP:10623"/>
        <dbReference type="ChEBI" id="CHEBI:15377"/>
        <dbReference type="ChEBI" id="CHEBI:15378"/>
        <dbReference type="ChEBI" id="CHEBI:57618"/>
        <dbReference type="ChEBI" id="CHEBI:58210"/>
        <dbReference type="ChEBI" id="CHEBI:58483"/>
        <dbReference type="ChEBI" id="CHEBI:128753"/>
        <dbReference type="EC" id="1.17.7.3"/>
    </reaction>
</comment>
<comment type="cofactor">
    <cofactor evidence="1">
        <name>[4Fe-4S] cluster</name>
        <dbReference type="ChEBI" id="CHEBI:49883"/>
    </cofactor>
    <text evidence="1">Binds 1 [4Fe-4S] cluster.</text>
</comment>
<comment type="pathway">
    <text evidence="1">Isoprenoid biosynthesis; isopentenyl diphosphate biosynthesis via DXP pathway; isopentenyl diphosphate from 1-deoxy-D-xylulose 5-phosphate: step 5/6.</text>
</comment>
<comment type="similarity">
    <text evidence="1">Belongs to the IspG family.</text>
</comment>
<dbReference type="EC" id="1.17.7.3" evidence="1"/>
<dbReference type="EMBL" id="AE017125">
    <property type="protein sequence ID" value="AAP77404.1"/>
    <property type="molecule type" value="Genomic_DNA"/>
</dbReference>
<dbReference type="RefSeq" id="WP_011115647.1">
    <property type="nucleotide sequence ID" value="NC_004917.1"/>
</dbReference>
<dbReference type="SMR" id="Q7VI04"/>
<dbReference type="STRING" id="235279.HH_0807"/>
<dbReference type="KEGG" id="hhe:HH_0807"/>
<dbReference type="eggNOG" id="COG0821">
    <property type="taxonomic scope" value="Bacteria"/>
</dbReference>
<dbReference type="HOGENOM" id="CLU_042258_0_0_7"/>
<dbReference type="OrthoDB" id="9803214at2"/>
<dbReference type="UniPathway" id="UPA00056">
    <property type="reaction ID" value="UER00096"/>
</dbReference>
<dbReference type="Proteomes" id="UP000002495">
    <property type="component" value="Chromosome"/>
</dbReference>
<dbReference type="GO" id="GO:0051539">
    <property type="term" value="F:4 iron, 4 sulfur cluster binding"/>
    <property type="evidence" value="ECO:0007669"/>
    <property type="project" value="UniProtKB-UniRule"/>
</dbReference>
<dbReference type="GO" id="GO:0046429">
    <property type="term" value="F:4-hydroxy-3-methylbut-2-en-1-yl diphosphate synthase activity (ferredoxin)"/>
    <property type="evidence" value="ECO:0007669"/>
    <property type="project" value="UniProtKB-UniRule"/>
</dbReference>
<dbReference type="GO" id="GO:0141197">
    <property type="term" value="F:4-hydroxy-3-methylbut-2-enyl-diphosphate synthase activity (flavodoxin)"/>
    <property type="evidence" value="ECO:0007669"/>
    <property type="project" value="UniProtKB-EC"/>
</dbReference>
<dbReference type="GO" id="GO:0005506">
    <property type="term" value="F:iron ion binding"/>
    <property type="evidence" value="ECO:0007669"/>
    <property type="project" value="InterPro"/>
</dbReference>
<dbReference type="GO" id="GO:0019288">
    <property type="term" value="P:isopentenyl diphosphate biosynthetic process, methylerythritol 4-phosphate pathway"/>
    <property type="evidence" value="ECO:0007669"/>
    <property type="project" value="UniProtKB-UniRule"/>
</dbReference>
<dbReference type="GO" id="GO:0016114">
    <property type="term" value="P:terpenoid biosynthetic process"/>
    <property type="evidence" value="ECO:0007669"/>
    <property type="project" value="InterPro"/>
</dbReference>
<dbReference type="FunFam" id="3.20.20.20:FF:000001">
    <property type="entry name" value="4-hydroxy-3-methylbut-2-en-1-yl diphosphate synthase (flavodoxin)"/>
    <property type="match status" value="1"/>
</dbReference>
<dbReference type="Gene3D" id="3.20.20.20">
    <property type="entry name" value="Dihydropteroate synthase-like"/>
    <property type="match status" value="1"/>
</dbReference>
<dbReference type="Gene3D" id="3.30.413.10">
    <property type="entry name" value="Sulfite Reductase Hemoprotein, domain 1"/>
    <property type="match status" value="1"/>
</dbReference>
<dbReference type="HAMAP" id="MF_00159">
    <property type="entry name" value="IspG"/>
    <property type="match status" value="1"/>
</dbReference>
<dbReference type="InterPro" id="IPR011005">
    <property type="entry name" value="Dihydropteroate_synth-like_sf"/>
</dbReference>
<dbReference type="InterPro" id="IPR016425">
    <property type="entry name" value="IspG_bac"/>
</dbReference>
<dbReference type="InterPro" id="IPR004588">
    <property type="entry name" value="IspG_bac-typ"/>
</dbReference>
<dbReference type="InterPro" id="IPR045854">
    <property type="entry name" value="NO2/SO3_Rdtase_4Fe4S_sf"/>
</dbReference>
<dbReference type="NCBIfam" id="TIGR00612">
    <property type="entry name" value="ispG_gcpE"/>
    <property type="match status" value="1"/>
</dbReference>
<dbReference type="NCBIfam" id="NF001540">
    <property type="entry name" value="PRK00366.1"/>
    <property type="match status" value="1"/>
</dbReference>
<dbReference type="PANTHER" id="PTHR30454">
    <property type="entry name" value="4-HYDROXY-3-METHYLBUT-2-EN-1-YL DIPHOSPHATE SYNTHASE"/>
    <property type="match status" value="1"/>
</dbReference>
<dbReference type="PANTHER" id="PTHR30454:SF0">
    <property type="entry name" value="4-HYDROXY-3-METHYLBUT-2-EN-1-YL DIPHOSPHATE SYNTHASE (FERREDOXIN), CHLOROPLASTIC"/>
    <property type="match status" value="1"/>
</dbReference>
<dbReference type="Pfam" id="PF04551">
    <property type="entry name" value="GcpE"/>
    <property type="match status" value="1"/>
</dbReference>
<dbReference type="PIRSF" id="PIRSF004640">
    <property type="entry name" value="IspG"/>
    <property type="match status" value="1"/>
</dbReference>
<dbReference type="SUPFAM" id="SSF51717">
    <property type="entry name" value="Dihydropteroate synthetase-like"/>
    <property type="match status" value="1"/>
</dbReference>
<dbReference type="SUPFAM" id="SSF56014">
    <property type="entry name" value="Nitrite and sulphite reductase 4Fe-4S domain-like"/>
    <property type="match status" value="1"/>
</dbReference>